<accession>O88327</accession>
<accession>Q810J3</accession>
<protein>
    <recommendedName>
        <fullName>Alpha-catulin</fullName>
    </recommendedName>
    <alternativeName>
        <fullName>Alpha-catenin-related protein</fullName>
        <shortName>ACRP</shortName>
    </alternativeName>
    <alternativeName>
        <fullName>Catenin alpha-like protein 1</fullName>
    </alternativeName>
</protein>
<comment type="function">
    <text evidence="1">May modulate the Rho pathway signaling by providing a scaffold for the Lbc Rho guanine nucleotide exchange factor (ARHGEF1).</text>
</comment>
<comment type="subunit">
    <text evidence="2 4">Interacts with ARHGEF1 (By similarity). Interacts with Dtna (PubMed:22577143). The interaction is required for correct localization of both Ctnnal1 and Dtna (PubMed:22577143).</text>
</comment>
<comment type="subcellular location">
    <subcellularLocation>
        <location evidence="1">Cytoplasm</location>
        <location evidence="1">Cytoskeleton</location>
    </subcellularLocation>
    <subcellularLocation>
        <location evidence="1">Cell membrane</location>
        <topology evidence="1">Peripheral membrane protein</topology>
    </subcellularLocation>
</comment>
<comment type="similarity">
    <text evidence="5">Belongs to the vinculin/alpha-catenin family.</text>
</comment>
<feature type="chain" id="PRO_0000064269" description="Alpha-catulin">
    <location>
        <begin position="1"/>
        <end position="731"/>
    </location>
</feature>
<feature type="region of interest" description="Disordered" evidence="3">
    <location>
        <begin position="535"/>
        <end position="559"/>
    </location>
</feature>
<feature type="modified residue" description="Phosphoserine" evidence="6">
    <location>
        <position position="373"/>
    </location>
</feature>
<feature type="modified residue" description="Phosphoserine" evidence="2">
    <location>
        <position position="537"/>
    </location>
</feature>
<feature type="sequence conflict" description="In Ref. 2; AAH50070." evidence="5" ref="2">
    <original>K</original>
    <variation>R</variation>
    <location>
        <position position="62"/>
    </location>
</feature>
<feature type="sequence conflict" description="In Ref. 2; AAH50070." evidence="5" ref="2">
    <original>T</original>
    <variation>S</variation>
    <location>
        <position position="135"/>
    </location>
</feature>
<feature type="sequence conflict" description="In Ref. 2; AAH50070." evidence="5" ref="2">
    <original>D</original>
    <variation>N</variation>
    <location>
        <position position="728"/>
    </location>
</feature>
<keyword id="KW-1003">Cell membrane</keyword>
<keyword id="KW-0963">Cytoplasm</keyword>
<keyword id="KW-0206">Cytoskeleton</keyword>
<keyword id="KW-0472">Membrane</keyword>
<keyword id="KW-0597">Phosphoprotein</keyword>
<keyword id="KW-1185">Reference proteome</keyword>
<dbReference type="EMBL" id="AF006071">
    <property type="protein sequence ID" value="AAC26012.1"/>
    <property type="molecule type" value="mRNA"/>
</dbReference>
<dbReference type="EMBL" id="BC050070">
    <property type="protein sequence ID" value="AAH50070.1"/>
    <property type="molecule type" value="mRNA"/>
</dbReference>
<dbReference type="CCDS" id="CCDS18200.1"/>
<dbReference type="RefSeq" id="NP_061231.3">
    <property type="nucleotide sequence ID" value="NM_018761.3"/>
</dbReference>
<dbReference type="SMR" id="O88327"/>
<dbReference type="FunCoup" id="O88327">
    <property type="interactions" value="1388"/>
</dbReference>
<dbReference type="IntAct" id="O88327">
    <property type="interactions" value="1"/>
</dbReference>
<dbReference type="STRING" id="10090.ENSMUSP00000036487"/>
<dbReference type="GlyGen" id="O88327">
    <property type="glycosylation" value="1 site, 1 O-linked glycan (1 site)"/>
</dbReference>
<dbReference type="iPTMnet" id="O88327"/>
<dbReference type="PhosphoSitePlus" id="O88327"/>
<dbReference type="PaxDb" id="10090-ENSMUSP00000036487"/>
<dbReference type="PeptideAtlas" id="O88327"/>
<dbReference type="ProteomicsDB" id="279288"/>
<dbReference type="Pumba" id="O88327"/>
<dbReference type="Antibodypedia" id="14981">
    <property type="antibodies" value="146 antibodies from 27 providers"/>
</dbReference>
<dbReference type="DNASU" id="54366"/>
<dbReference type="Ensembl" id="ENSMUST00000045142.15">
    <property type="protein sequence ID" value="ENSMUSP00000036487.9"/>
    <property type="gene ID" value="ENSMUSG00000038816.15"/>
</dbReference>
<dbReference type="GeneID" id="54366"/>
<dbReference type="KEGG" id="mmu:54366"/>
<dbReference type="UCSC" id="uc008sxu.2">
    <property type="organism name" value="mouse"/>
</dbReference>
<dbReference type="AGR" id="MGI:1859649"/>
<dbReference type="CTD" id="8727"/>
<dbReference type="MGI" id="MGI:1859649">
    <property type="gene designation" value="Ctnnal1"/>
</dbReference>
<dbReference type="VEuPathDB" id="HostDB:ENSMUSG00000038816"/>
<dbReference type="eggNOG" id="KOG3681">
    <property type="taxonomic scope" value="Eukaryota"/>
</dbReference>
<dbReference type="GeneTree" id="ENSGT01030000234543"/>
<dbReference type="HOGENOM" id="CLU_015314_4_0_1"/>
<dbReference type="InParanoid" id="O88327"/>
<dbReference type="OMA" id="DQQKMAK"/>
<dbReference type="OrthoDB" id="9933814at2759"/>
<dbReference type="PhylomeDB" id="O88327"/>
<dbReference type="TreeFam" id="TF313686"/>
<dbReference type="BioGRID-ORCS" id="54366">
    <property type="hits" value="2 hits in 79 CRISPR screens"/>
</dbReference>
<dbReference type="ChiTaRS" id="Ctnnal1">
    <property type="organism name" value="mouse"/>
</dbReference>
<dbReference type="PRO" id="PR:O88327"/>
<dbReference type="Proteomes" id="UP000000589">
    <property type="component" value="Chromosome 4"/>
</dbReference>
<dbReference type="RNAct" id="O88327">
    <property type="molecule type" value="protein"/>
</dbReference>
<dbReference type="Bgee" id="ENSMUSG00000038816">
    <property type="expression patterns" value="Expressed in urinary bladder urothelium and 245 other cell types or tissues"/>
</dbReference>
<dbReference type="ExpressionAtlas" id="O88327">
    <property type="expression patterns" value="baseline and differential"/>
</dbReference>
<dbReference type="GO" id="GO:0005911">
    <property type="term" value="C:cell-cell junction"/>
    <property type="evidence" value="ECO:0007669"/>
    <property type="project" value="UniProtKB-ARBA"/>
</dbReference>
<dbReference type="GO" id="GO:0005856">
    <property type="term" value="C:cytoskeleton"/>
    <property type="evidence" value="ECO:0007669"/>
    <property type="project" value="UniProtKB-SubCell"/>
</dbReference>
<dbReference type="GO" id="GO:0005829">
    <property type="term" value="C:cytosol"/>
    <property type="evidence" value="ECO:0000266"/>
    <property type="project" value="MGI"/>
</dbReference>
<dbReference type="GO" id="GO:0005886">
    <property type="term" value="C:plasma membrane"/>
    <property type="evidence" value="ECO:0007669"/>
    <property type="project" value="UniProtKB-SubCell"/>
</dbReference>
<dbReference type="GO" id="GO:0051015">
    <property type="term" value="F:actin filament binding"/>
    <property type="evidence" value="ECO:0007669"/>
    <property type="project" value="InterPro"/>
</dbReference>
<dbReference type="GO" id="GO:0045296">
    <property type="term" value="F:cadherin binding"/>
    <property type="evidence" value="ECO:0007669"/>
    <property type="project" value="InterPro"/>
</dbReference>
<dbReference type="GO" id="GO:0007155">
    <property type="term" value="P:cell adhesion"/>
    <property type="evidence" value="ECO:0007669"/>
    <property type="project" value="InterPro"/>
</dbReference>
<dbReference type="GO" id="GO:0007266">
    <property type="term" value="P:Rho protein signal transduction"/>
    <property type="evidence" value="ECO:0000266"/>
    <property type="project" value="MGI"/>
</dbReference>
<dbReference type="FunFam" id="1.20.120.230:FF:000014">
    <property type="entry name" value="Catenin alpha like 1"/>
    <property type="match status" value="1"/>
</dbReference>
<dbReference type="FunFam" id="1.20.120.230:FF:000016">
    <property type="entry name" value="Catenin alpha like 1"/>
    <property type="match status" value="1"/>
</dbReference>
<dbReference type="FunFam" id="1.20.120.230:FF:000017">
    <property type="entry name" value="Catenin alpha like 1"/>
    <property type="match status" value="1"/>
</dbReference>
<dbReference type="Gene3D" id="1.20.120.230">
    <property type="entry name" value="Alpha-catenin/vinculin-like"/>
    <property type="match status" value="4"/>
</dbReference>
<dbReference type="InterPro" id="IPR036723">
    <property type="entry name" value="Alpha-catenin/vinculin-like_sf"/>
</dbReference>
<dbReference type="InterPro" id="IPR001033">
    <property type="entry name" value="Alpha_catenin"/>
</dbReference>
<dbReference type="InterPro" id="IPR030045">
    <property type="entry name" value="CTNNAL1"/>
</dbReference>
<dbReference type="InterPro" id="IPR006077">
    <property type="entry name" value="Vinculin/catenin"/>
</dbReference>
<dbReference type="PANTHER" id="PTHR46342">
    <property type="entry name" value="ALPHA-CATULIN"/>
    <property type="match status" value="1"/>
</dbReference>
<dbReference type="PANTHER" id="PTHR46342:SF1">
    <property type="entry name" value="ALPHA-CATULIN"/>
    <property type="match status" value="1"/>
</dbReference>
<dbReference type="Pfam" id="PF01044">
    <property type="entry name" value="Vinculin"/>
    <property type="match status" value="2"/>
</dbReference>
<dbReference type="PRINTS" id="PR00805">
    <property type="entry name" value="ALPHACATENIN"/>
</dbReference>
<dbReference type="SUPFAM" id="SSF47220">
    <property type="entry name" value="alpha-catenin/vinculin-like"/>
    <property type="match status" value="3"/>
</dbReference>
<reference key="1">
    <citation type="submission" date="1997-05" db="EMBL/GenBank/DDBJ databases">
        <authorList>
            <person name="Kishi M."/>
            <person name="Nagafuchi A."/>
            <person name="Tsukita S."/>
        </authorList>
    </citation>
    <scope>NUCLEOTIDE SEQUENCE [MRNA]</scope>
</reference>
<reference key="2">
    <citation type="journal article" date="2004" name="Genome Res.">
        <title>The status, quality, and expansion of the NIH full-length cDNA project: the Mammalian Gene Collection (MGC).</title>
        <authorList>
            <consortium name="The MGC Project Team"/>
        </authorList>
    </citation>
    <scope>NUCLEOTIDE SEQUENCE [LARGE SCALE MRNA]</scope>
    <source>
        <strain>C57BL/6J</strain>
        <tissue>Embryo</tissue>
    </source>
</reference>
<reference key="3">
    <citation type="journal article" date="2010" name="Cell">
        <title>A tissue-specific atlas of mouse protein phosphorylation and expression.</title>
        <authorList>
            <person name="Huttlin E.L."/>
            <person name="Jedrychowski M.P."/>
            <person name="Elias J.E."/>
            <person name="Goswami T."/>
            <person name="Rad R."/>
            <person name="Beausoleil S.A."/>
            <person name="Villen J."/>
            <person name="Haas W."/>
            <person name="Sowa M.E."/>
            <person name="Gygi S.P."/>
        </authorList>
    </citation>
    <scope>PHOSPHORYLATION [LARGE SCALE ANALYSIS] AT SER-373</scope>
    <scope>IDENTIFICATION BY MASS SPECTROMETRY [LARGE SCALE ANALYSIS]</scope>
    <source>
        <tissue>Kidney</tissue>
        <tissue>Testis</tissue>
    </source>
</reference>
<reference evidence="5" key="4">
    <citation type="journal article" date="2012" name="J. Biol. Chem.">
        <title>Interaction of alpha-catulin with dystrobrevin contributes to integrity of dystrophin complex in muscle.</title>
        <authorList>
            <person name="Oh H.J."/>
            <person name="Abraham L.S."/>
            <person name="van Hengel J."/>
            <person name="Stove C."/>
            <person name="Proszynski T.J."/>
            <person name="Gevaert K."/>
            <person name="DiMario J.X."/>
            <person name="Sanes J.R."/>
            <person name="van Roy F."/>
            <person name="Kim H."/>
        </authorList>
    </citation>
    <scope>INTERACTION WITH DTNA</scope>
</reference>
<organism>
    <name type="scientific">Mus musculus</name>
    <name type="common">Mouse</name>
    <dbReference type="NCBI Taxonomy" id="10090"/>
    <lineage>
        <taxon>Eukaryota</taxon>
        <taxon>Metazoa</taxon>
        <taxon>Chordata</taxon>
        <taxon>Craniata</taxon>
        <taxon>Vertebrata</taxon>
        <taxon>Euteleostomi</taxon>
        <taxon>Mammalia</taxon>
        <taxon>Eutheria</taxon>
        <taxon>Euarchontoglires</taxon>
        <taxon>Glires</taxon>
        <taxon>Rodentia</taxon>
        <taxon>Myomorpha</taxon>
        <taxon>Muroidea</taxon>
        <taxon>Muridae</taxon>
        <taxon>Murinae</taxon>
        <taxon>Mus</taxon>
        <taxon>Mus</taxon>
    </lineage>
</organism>
<sequence length="731" mass="81462">MAASPVPGGGGAGAVHSSNAAGFTFDSGLEIRTRSVEQTLLPLVSQITTLINHKDNTKKSDKTLQAIQRVGQAVNLAVGRFVKVGEAIANENWDLKEEINIACIEAKQAGETIASLTDVTKRSHLESDGQVTILTDKTGVVQAARLLLSSVTKVLLLADRVVIKQIVTSRNKILATMERLEKVNSFQEFVQIFSQFGNEMVEFAHLTGDRQNDLKDEKKKARMAVARAVLEKGTMMLLTASKTCLRHPSCESAHTNKEGVFDRMRVALEKVTEIVTDCRLSGETDSSSVSIFTGIKELKVNIEALRENVCFESKENLSAALEAVLEHVEDFTDSAYTSHEHRERILELSSQARTELQQLLSVWMQTQSRKTKSAAEELELTVLKISHSLDELRRELHCTAMQLAADLLKFHADHVVLKALKVTGVEGNLEALAEYACKLSEQKEQLVETCRLLRHISGTEPLEITCIHAEETFQVTGQQIISAAETLTLHPSSKIAKENLDVFCEAWESQMSDMATLLREISDVFEGRRGERCDHLSLPKPTKNSANLKSLKPDKPDSEEQAKIAKLGLKLGLLSSDADCEIEKWEDEENEIVRHGRNMSRMAYSLYLFTRGEGPLKTSQDLIHFLEVFAAEGLKLTSSVQSFSKQLKDDDKLMLLLEINKLIPLCHQLQTITKTSLQSKVFLKVDKCITKIRSMMTLVVQLLSLCYKLLKKMENNRWGSATNKDTMDGQN</sequence>
<evidence type="ECO:0000250" key="1"/>
<evidence type="ECO:0000250" key="2">
    <source>
        <dbReference type="UniProtKB" id="Q9UBT7"/>
    </source>
</evidence>
<evidence type="ECO:0000256" key="3">
    <source>
        <dbReference type="SAM" id="MobiDB-lite"/>
    </source>
</evidence>
<evidence type="ECO:0000269" key="4">
    <source>
    </source>
</evidence>
<evidence type="ECO:0000305" key="5"/>
<evidence type="ECO:0007744" key="6">
    <source>
    </source>
</evidence>
<proteinExistence type="evidence at protein level"/>
<gene>
    <name type="primary">Ctnnal1</name>
    <name type="synonym">Catnal1</name>
</gene>
<name>CTNL1_MOUSE</name>